<protein>
    <recommendedName>
        <fullName evidence="1">tRNA pseudouridine synthase A</fullName>
        <ecNumber evidence="1">5.4.99.12</ecNumber>
    </recommendedName>
    <alternativeName>
        <fullName evidence="1">tRNA pseudouridine(38-40) synthase</fullName>
    </alternativeName>
    <alternativeName>
        <fullName evidence="1">tRNA pseudouridylate synthase I</fullName>
    </alternativeName>
    <alternativeName>
        <fullName evidence="1">tRNA-uridine isomerase I</fullName>
    </alternativeName>
</protein>
<accession>Q2KYM0</accession>
<reference key="1">
    <citation type="journal article" date="2006" name="J. Bacteriol.">
        <title>Comparison of the genome sequence of the poultry pathogen Bordetella avium with those of B. bronchiseptica, B. pertussis, and B. parapertussis reveals extensive diversity in surface structures associated with host interaction.</title>
        <authorList>
            <person name="Sebaihia M."/>
            <person name="Preston A."/>
            <person name="Maskell D.J."/>
            <person name="Kuzmiak H."/>
            <person name="Connell T.D."/>
            <person name="King N.D."/>
            <person name="Orndorff P.E."/>
            <person name="Miyamoto D.M."/>
            <person name="Thomson N.R."/>
            <person name="Harris D."/>
            <person name="Goble A."/>
            <person name="Lord A."/>
            <person name="Murphy L."/>
            <person name="Quail M.A."/>
            <person name="Rutter S."/>
            <person name="Squares R."/>
            <person name="Squares S."/>
            <person name="Woodward J."/>
            <person name="Parkhill J."/>
            <person name="Temple L.M."/>
        </authorList>
    </citation>
    <scope>NUCLEOTIDE SEQUENCE [LARGE SCALE GENOMIC DNA]</scope>
    <source>
        <strain>197N</strain>
    </source>
</reference>
<proteinExistence type="inferred from homology"/>
<keyword id="KW-0413">Isomerase</keyword>
<keyword id="KW-1185">Reference proteome</keyword>
<keyword id="KW-0819">tRNA processing</keyword>
<sequence length="267" mass="29683">MTRIALGLSYDGSSWQGWQTQPHGQTVQDTLEAALGQFSGTGAPLDTLCAGRTDTGVHAAMQVVHVDTHLNRRAESWVRGVNAFLPSSISIHWAKEVGEDFHARFSARSRTYVYLLWRGRVRPALWAHRAGWCFQPLDVTAMRQAAQALLGEHDFSSFRSSQCQARHPVRHLTRLDIAERGSFLVFTLQANAFLHHMVRNIMGALLQIGQGRESVDWMASLLRARDRRLGAPTFSPDGLYLSAIDYPTLFELPDLDGGSSLLAPFTA</sequence>
<evidence type="ECO:0000255" key="1">
    <source>
        <dbReference type="HAMAP-Rule" id="MF_00171"/>
    </source>
</evidence>
<comment type="function">
    <text evidence="1">Formation of pseudouridine at positions 38, 39 and 40 in the anticodon stem and loop of transfer RNAs.</text>
</comment>
<comment type="catalytic activity">
    <reaction evidence="1">
        <text>uridine(38/39/40) in tRNA = pseudouridine(38/39/40) in tRNA</text>
        <dbReference type="Rhea" id="RHEA:22376"/>
        <dbReference type="Rhea" id="RHEA-COMP:10085"/>
        <dbReference type="Rhea" id="RHEA-COMP:10087"/>
        <dbReference type="ChEBI" id="CHEBI:65314"/>
        <dbReference type="ChEBI" id="CHEBI:65315"/>
        <dbReference type="EC" id="5.4.99.12"/>
    </reaction>
</comment>
<comment type="subunit">
    <text evidence="1">Homodimer.</text>
</comment>
<comment type="similarity">
    <text evidence="1">Belongs to the tRNA pseudouridine synthase TruA family.</text>
</comment>
<dbReference type="EC" id="5.4.99.12" evidence="1"/>
<dbReference type="EMBL" id="AM167904">
    <property type="protein sequence ID" value="CAJ49875.1"/>
    <property type="molecule type" value="Genomic_DNA"/>
</dbReference>
<dbReference type="RefSeq" id="WP_012417926.1">
    <property type="nucleotide sequence ID" value="NC_010645.1"/>
</dbReference>
<dbReference type="SMR" id="Q2KYM0"/>
<dbReference type="STRING" id="360910.BAV2265"/>
<dbReference type="GeneID" id="92934621"/>
<dbReference type="KEGG" id="bav:BAV2265"/>
<dbReference type="eggNOG" id="COG0101">
    <property type="taxonomic scope" value="Bacteria"/>
</dbReference>
<dbReference type="HOGENOM" id="CLU_014673_0_2_4"/>
<dbReference type="OrthoDB" id="9811823at2"/>
<dbReference type="Proteomes" id="UP000001977">
    <property type="component" value="Chromosome"/>
</dbReference>
<dbReference type="GO" id="GO:0003723">
    <property type="term" value="F:RNA binding"/>
    <property type="evidence" value="ECO:0007669"/>
    <property type="project" value="InterPro"/>
</dbReference>
<dbReference type="GO" id="GO:0160147">
    <property type="term" value="F:tRNA pseudouridine(38-40) synthase activity"/>
    <property type="evidence" value="ECO:0007669"/>
    <property type="project" value="UniProtKB-EC"/>
</dbReference>
<dbReference type="GO" id="GO:0031119">
    <property type="term" value="P:tRNA pseudouridine synthesis"/>
    <property type="evidence" value="ECO:0007669"/>
    <property type="project" value="UniProtKB-UniRule"/>
</dbReference>
<dbReference type="CDD" id="cd02570">
    <property type="entry name" value="PseudoU_synth_EcTruA"/>
    <property type="match status" value="1"/>
</dbReference>
<dbReference type="FunFam" id="3.30.70.580:FF:000001">
    <property type="entry name" value="tRNA pseudouridine synthase A"/>
    <property type="match status" value="1"/>
</dbReference>
<dbReference type="Gene3D" id="3.30.70.660">
    <property type="entry name" value="Pseudouridine synthase I, catalytic domain, C-terminal subdomain"/>
    <property type="match status" value="1"/>
</dbReference>
<dbReference type="Gene3D" id="3.30.70.580">
    <property type="entry name" value="Pseudouridine synthase I, catalytic domain, N-terminal subdomain"/>
    <property type="match status" value="1"/>
</dbReference>
<dbReference type="HAMAP" id="MF_00171">
    <property type="entry name" value="TruA"/>
    <property type="match status" value="1"/>
</dbReference>
<dbReference type="InterPro" id="IPR020103">
    <property type="entry name" value="PsdUridine_synth_cat_dom_sf"/>
</dbReference>
<dbReference type="InterPro" id="IPR001406">
    <property type="entry name" value="PsdUridine_synth_TruA"/>
</dbReference>
<dbReference type="InterPro" id="IPR020097">
    <property type="entry name" value="PsdUridine_synth_TruA_a/b_dom"/>
</dbReference>
<dbReference type="InterPro" id="IPR020095">
    <property type="entry name" value="PsdUridine_synth_TruA_C"/>
</dbReference>
<dbReference type="InterPro" id="IPR020094">
    <property type="entry name" value="TruA/RsuA/RluB/E/F_N"/>
</dbReference>
<dbReference type="NCBIfam" id="TIGR00071">
    <property type="entry name" value="hisT_truA"/>
    <property type="match status" value="1"/>
</dbReference>
<dbReference type="PANTHER" id="PTHR11142">
    <property type="entry name" value="PSEUDOURIDYLATE SYNTHASE"/>
    <property type="match status" value="1"/>
</dbReference>
<dbReference type="PANTHER" id="PTHR11142:SF0">
    <property type="entry name" value="TRNA PSEUDOURIDINE SYNTHASE-LIKE 1"/>
    <property type="match status" value="1"/>
</dbReference>
<dbReference type="Pfam" id="PF01416">
    <property type="entry name" value="PseudoU_synth_1"/>
    <property type="match status" value="2"/>
</dbReference>
<dbReference type="PIRSF" id="PIRSF001430">
    <property type="entry name" value="tRNA_psdUrid_synth"/>
    <property type="match status" value="1"/>
</dbReference>
<dbReference type="SUPFAM" id="SSF55120">
    <property type="entry name" value="Pseudouridine synthase"/>
    <property type="match status" value="1"/>
</dbReference>
<name>TRUA_BORA1</name>
<organism>
    <name type="scientific">Bordetella avium (strain 197N)</name>
    <dbReference type="NCBI Taxonomy" id="360910"/>
    <lineage>
        <taxon>Bacteria</taxon>
        <taxon>Pseudomonadati</taxon>
        <taxon>Pseudomonadota</taxon>
        <taxon>Betaproteobacteria</taxon>
        <taxon>Burkholderiales</taxon>
        <taxon>Alcaligenaceae</taxon>
        <taxon>Bordetella</taxon>
    </lineage>
</organism>
<gene>
    <name evidence="1" type="primary">truA</name>
    <name type="ordered locus">BAV2265</name>
</gene>
<feature type="chain" id="PRO_1000017043" description="tRNA pseudouridine synthase A">
    <location>
        <begin position="1"/>
        <end position="267"/>
    </location>
</feature>
<feature type="active site" description="Nucleophile" evidence="1">
    <location>
        <position position="54"/>
    </location>
</feature>
<feature type="binding site" evidence="1">
    <location>
        <position position="112"/>
    </location>
    <ligand>
        <name>substrate</name>
    </ligand>
</feature>